<name>MEC_MYCTU</name>
<proteinExistence type="evidence at protein level"/>
<keyword id="KW-0028">Amino-acid biosynthesis</keyword>
<keyword id="KW-0198">Cysteine biosynthesis</keyword>
<keyword id="KW-0378">Hydrolase</keyword>
<keyword id="KW-0479">Metal-binding</keyword>
<keyword id="KW-0482">Metalloprotease</keyword>
<keyword id="KW-0645">Protease</keyword>
<keyword id="KW-1185">Reference proteome</keyword>
<keyword id="KW-0862">Zinc</keyword>
<evidence type="ECO:0000255" key="1">
    <source>
        <dbReference type="PROSITE-ProRule" id="PRU01182"/>
    </source>
</evidence>
<evidence type="ECO:0000269" key="2">
    <source>
    </source>
</evidence>
<evidence type="ECO:0000269" key="3">
    <source>
    </source>
</evidence>
<evidence type="ECO:0000269" key="4">
    <source>
    </source>
</evidence>
<evidence type="ECO:0000305" key="5"/>
<sequence>MLLRKGTVYVLVIRADLVNAMVAHARRDHPDEACGVLAGPEGSDRPERHIPMTNAERSPTFYRLDSGEQLKVWRAMEDADEVPVVIYHSHTATEAYPSRTDVKLATEPDAHYVLVSTRDPHRHELRSYRIVDGAVTEEPVNVVEQY</sequence>
<gene>
    <name type="primary">mec</name>
    <name type="synonym">mec+</name>
    <name type="ordered locus">Rv1334</name>
    <name type="ORF">MTCY130.19</name>
</gene>
<comment type="function">
    <text evidence="4">Protease that hydrolyzes the covalent CysO-cysteine adduct synthesized by CysM to release L-cysteine and regenerate CysO.</text>
</comment>
<comment type="catalytic activity">
    <reaction evidence="4">
        <text>[CysO sulfur-carrier protein]-Gly-NH-CH2-C(O)-S-L-Cys + H2O = [CysO sulfur-carrier protein]-C-terminal Gly-Gly + L-cysteine + H(+)</text>
        <dbReference type="Rhea" id="RHEA:48732"/>
        <dbReference type="Rhea" id="RHEA-COMP:12207"/>
        <dbReference type="Rhea" id="RHEA-COMP:12212"/>
        <dbReference type="ChEBI" id="CHEBI:15377"/>
        <dbReference type="ChEBI" id="CHEBI:15378"/>
        <dbReference type="ChEBI" id="CHEBI:35235"/>
        <dbReference type="ChEBI" id="CHEBI:90778"/>
        <dbReference type="ChEBI" id="CHEBI:90783"/>
        <dbReference type="EC" id="3.13.1.6"/>
    </reaction>
</comment>
<comment type="cofactor">
    <cofactor evidence="4">
        <name>Zn(2+)</name>
        <dbReference type="ChEBI" id="CHEBI:29105"/>
    </cofactor>
</comment>
<comment type="activity regulation">
    <text evidence="4">Inhibited by EDTA in vitro.</text>
</comment>
<comment type="pathway">
    <text>Amino-acid biosynthesis; L-cysteine biosynthesis.</text>
</comment>
<comment type="induction">
    <text evidence="2">Up-regulated under oxidative stress conditions.</text>
</comment>
<comment type="disruption phenotype">
    <text evidence="3">Strains lacking this gene are shown to be attenuated in macrophages.</text>
</comment>
<comment type="similarity">
    <text evidence="5">Belongs to the peptidase M67A family.</text>
</comment>
<reference key="1">
    <citation type="journal article" date="1998" name="Nature">
        <title>Deciphering the biology of Mycobacterium tuberculosis from the complete genome sequence.</title>
        <authorList>
            <person name="Cole S.T."/>
            <person name="Brosch R."/>
            <person name="Parkhill J."/>
            <person name="Garnier T."/>
            <person name="Churcher C.M."/>
            <person name="Harris D.E."/>
            <person name="Gordon S.V."/>
            <person name="Eiglmeier K."/>
            <person name="Gas S."/>
            <person name="Barry C.E. III"/>
            <person name="Tekaia F."/>
            <person name="Badcock K."/>
            <person name="Basham D."/>
            <person name="Brown D."/>
            <person name="Chillingworth T."/>
            <person name="Connor R."/>
            <person name="Davies R.M."/>
            <person name="Devlin K."/>
            <person name="Feltwell T."/>
            <person name="Gentles S."/>
            <person name="Hamlin N."/>
            <person name="Holroyd S."/>
            <person name="Hornsby T."/>
            <person name="Jagels K."/>
            <person name="Krogh A."/>
            <person name="McLean J."/>
            <person name="Moule S."/>
            <person name="Murphy L.D."/>
            <person name="Oliver S."/>
            <person name="Osborne J."/>
            <person name="Quail M.A."/>
            <person name="Rajandream M.A."/>
            <person name="Rogers J."/>
            <person name="Rutter S."/>
            <person name="Seeger K."/>
            <person name="Skelton S."/>
            <person name="Squares S."/>
            <person name="Squares R."/>
            <person name="Sulston J.E."/>
            <person name="Taylor K."/>
            <person name="Whitehead S."/>
            <person name="Barrell B.G."/>
        </authorList>
    </citation>
    <scope>NUCLEOTIDE SEQUENCE [LARGE SCALE GENOMIC DNA]</scope>
    <source>
        <strain>ATCC 25618 / H37Rv</strain>
    </source>
</reference>
<reference key="2">
    <citation type="journal article" date="2002" name="Mol. Microbiol.">
        <title>Role of the extracytoplasmic-function sigma factor sigma(H) in Mycobacterium tuberculosis global gene expression.</title>
        <authorList>
            <person name="Manganelli R."/>
            <person name="Voskuil M.I."/>
            <person name="Schoolnik G.K."/>
            <person name="Dubnau E."/>
            <person name="Gomez M."/>
            <person name="Smith I."/>
        </authorList>
    </citation>
    <scope>INDUCTION</scope>
    <source>
        <strain>ATCC 25618 / H37Rv</strain>
    </source>
</reference>
<reference key="3">
    <citation type="journal article" date="2005" name="J. Am. Chem. Soc.">
        <title>Reconstitution of a new cysteine biosynthetic pathway in Mycobacterium tuberculosis.</title>
        <authorList>
            <person name="Burns K.E."/>
            <person name="Baumgart S."/>
            <person name="Dorrestein P.C."/>
            <person name="Zhai H."/>
            <person name="McLafferty F.W."/>
            <person name="Begley T.P."/>
        </authorList>
    </citation>
    <scope>FUNCTION</scope>
    <scope>CATALYTIC ACTIVITY</scope>
    <scope>COFACTOR</scope>
    <scope>ACTIVITY REGULATION</scope>
    <source>
        <strain>ATCC 25618 / H37Rv</strain>
    </source>
</reference>
<reference key="4">
    <citation type="journal article" date="2005" name="Proc. Natl. Acad. Sci. U.S.A.">
        <title>Genome-wide requirements for Mycobacterium tuberculosis adaptation and survival in macrophages.</title>
        <authorList>
            <person name="Rengarajan J."/>
            <person name="Bloom B.R."/>
            <person name="Rubin E.J."/>
        </authorList>
    </citation>
    <scope>DISRUPTION PHENOTYPE</scope>
    <source>
        <strain>ATCC 25618 / H37Rv</strain>
    </source>
</reference>
<reference key="5">
    <citation type="journal article" date="2011" name="Mol. Cell. Proteomics">
        <title>Proteogenomic analysis of Mycobacterium tuberculosis by high resolution mass spectrometry.</title>
        <authorList>
            <person name="Kelkar D.S."/>
            <person name="Kumar D."/>
            <person name="Kumar P."/>
            <person name="Balakrishnan L."/>
            <person name="Muthusamy B."/>
            <person name="Yadav A.K."/>
            <person name="Shrivastava P."/>
            <person name="Marimuthu A."/>
            <person name="Anand S."/>
            <person name="Sundaram H."/>
            <person name="Kingsbury R."/>
            <person name="Harsha H.C."/>
            <person name="Nair B."/>
            <person name="Prasad T.S."/>
            <person name="Chauhan D.S."/>
            <person name="Katoch K."/>
            <person name="Katoch V.M."/>
            <person name="Kumar P."/>
            <person name="Chaerkady R."/>
            <person name="Ramachandran S."/>
            <person name="Dash D."/>
            <person name="Pandey A."/>
        </authorList>
    </citation>
    <scope>IDENTIFICATION BY MASS SPECTROMETRY [LARGE SCALE ANALYSIS]</scope>
    <source>
        <strain>ATCC 25618 / H37Rv</strain>
    </source>
</reference>
<organism>
    <name type="scientific">Mycobacterium tuberculosis (strain ATCC 25618 / H37Rv)</name>
    <dbReference type="NCBI Taxonomy" id="83332"/>
    <lineage>
        <taxon>Bacteria</taxon>
        <taxon>Bacillati</taxon>
        <taxon>Actinomycetota</taxon>
        <taxon>Actinomycetes</taxon>
        <taxon>Mycobacteriales</taxon>
        <taxon>Mycobacteriaceae</taxon>
        <taxon>Mycobacterium</taxon>
        <taxon>Mycobacterium tuberculosis complex</taxon>
    </lineage>
</organism>
<protein>
    <recommendedName>
        <fullName>CysO-cysteine peptidase</fullName>
        <ecNumber evidence="4">3.13.1.6</ecNumber>
    </recommendedName>
    <alternativeName>
        <fullName>Metallocarboxypeptidase Mec</fullName>
    </alternativeName>
</protein>
<dbReference type="EC" id="3.13.1.6" evidence="4"/>
<dbReference type="EMBL" id="AL123456">
    <property type="protein sequence ID" value="CCP44092.1"/>
    <property type="molecule type" value="Genomic_DNA"/>
</dbReference>
<dbReference type="PIR" id="B70771">
    <property type="entry name" value="B70771"/>
</dbReference>
<dbReference type="RefSeq" id="NP_215850.1">
    <property type="nucleotide sequence ID" value="NC_000962.3"/>
</dbReference>
<dbReference type="RefSeq" id="WP_003898830.1">
    <property type="nucleotide sequence ID" value="NZ_NVQJ01000031.1"/>
</dbReference>
<dbReference type="SMR" id="P9WHS1"/>
<dbReference type="STRING" id="83332.Rv1334"/>
<dbReference type="MEROPS" id="M67.009"/>
<dbReference type="PaxDb" id="83332-Rv1334"/>
<dbReference type="DNASU" id="886875"/>
<dbReference type="GeneID" id="45425312"/>
<dbReference type="GeneID" id="886875"/>
<dbReference type="KEGG" id="mtu:Rv1334"/>
<dbReference type="KEGG" id="mtv:RVBD_1334"/>
<dbReference type="PATRIC" id="fig|83332.111.peg.1489"/>
<dbReference type="TubercuList" id="Rv1334"/>
<dbReference type="eggNOG" id="COG1310">
    <property type="taxonomic scope" value="Bacteria"/>
</dbReference>
<dbReference type="InParanoid" id="P9WHS1"/>
<dbReference type="OrthoDB" id="3196553at2"/>
<dbReference type="PhylomeDB" id="P9WHS1"/>
<dbReference type="BioCyc" id="MetaCyc:G185E-5513-MONOMER"/>
<dbReference type="BRENDA" id="3.13.1.6">
    <property type="organism ID" value="3445"/>
</dbReference>
<dbReference type="Reactome" id="R-MTU-936654">
    <property type="pathway name" value="Cysteine synthesis from O-phosphoserine"/>
</dbReference>
<dbReference type="UniPathway" id="UPA00136"/>
<dbReference type="Proteomes" id="UP000001584">
    <property type="component" value="Chromosome"/>
</dbReference>
<dbReference type="GO" id="GO:0005829">
    <property type="term" value="C:cytosol"/>
    <property type="evidence" value="ECO:0000304"/>
    <property type="project" value="Reactome"/>
</dbReference>
<dbReference type="GO" id="GO:0008235">
    <property type="term" value="F:metalloexopeptidase activity"/>
    <property type="evidence" value="ECO:0000314"/>
    <property type="project" value="MTBBASE"/>
</dbReference>
<dbReference type="GO" id="GO:0008270">
    <property type="term" value="F:zinc ion binding"/>
    <property type="evidence" value="ECO:0000314"/>
    <property type="project" value="MTBBASE"/>
</dbReference>
<dbReference type="GO" id="GO:0019344">
    <property type="term" value="P:cysteine biosynthetic process"/>
    <property type="evidence" value="ECO:0000314"/>
    <property type="project" value="MTBBASE"/>
</dbReference>
<dbReference type="GO" id="GO:0006508">
    <property type="term" value="P:proteolysis"/>
    <property type="evidence" value="ECO:0007669"/>
    <property type="project" value="UniProtKB-KW"/>
</dbReference>
<dbReference type="CDD" id="cd08070">
    <property type="entry name" value="MPN_like"/>
    <property type="match status" value="1"/>
</dbReference>
<dbReference type="FunFam" id="3.40.140.10:FF:000048">
    <property type="entry name" value="CysO-cysteine peptidase"/>
    <property type="match status" value="1"/>
</dbReference>
<dbReference type="Gene3D" id="3.40.140.10">
    <property type="entry name" value="Cytidine Deaminase, domain 2"/>
    <property type="match status" value="1"/>
</dbReference>
<dbReference type="InterPro" id="IPR028090">
    <property type="entry name" value="JAB_dom_prok"/>
</dbReference>
<dbReference type="InterPro" id="IPR000555">
    <property type="entry name" value="JAMM/MPN+_dom"/>
</dbReference>
<dbReference type="InterPro" id="IPR037518">
    <property type="entry name" value="MPN"/>
</dbReference>
<dbReference type="InterPro" id="IPR051929">
    <property type="entry name" value="VirAsm_ModProt"/>
</dbReference>
<dbReference type="PANTHER" id="PTHR34858">
    <property type="entry name" value="CYSO-CYSTEINE PEPTIDASE"/>
    <property type="match status" value="1"/>
</dbReference>
<dbReference type="PANTHER" id="PTHR34858:SF1">
    <property type="entry name" value="CYSO-CYSTEINE PEPTIDASE"/>
    <property type="match status" value="1"/>
</dbReference>
<dbReference type="Pfam" id="PF14464">
    <property type="entry name" value="Prok-JAB"/>
    <property type="match status" value="1"/>
</dbReference>
<dbReference type="SMART" id="SM00232">
    <property type="entry name" value="JAB_MPN"/>
    <property type="match status" value="1"/>
</dbReference>
<dbReference type="SUPFAM" id="SSF102712">
    <property type="entry name" value="JAB1/MPN domain"/>
    <property type="match status" value="1"/>
</dbReference>
<dbReference type="PROSITE" id="PS50249">
    <property type="entry name" value="MPN"/>
    <property type="match status" value="1"/>
</dbReference>
<accession>P9WHS1</accession>
<accession>L0T6J9</accession>
<accession>P64813</accession>
<accession>Q10645</accession>
<feature type="chain" id="PRO_0000014095" description="CysO-cysteine peptidase">
    <location>
        <begin position="1"/>
        <end position="146"/>
    </location>
</feature>
<feature type="domain" description="MPN" evidence="1">
    <location>
        <begin position="11"/>
        <end position="134"/>
    </location>
</feature>
<feature type="short sequence motif" description="JAMM motif" evidence="1">
    <location>
        <begin position="88"/>
        <end position="101"/>
    </location>
</feature>
<feature type="binding site" evidence="1">
    <location>
        <position position="88"/>
    </location>
    <ligand>
        <name>Zn(2+)</name>
        <dbReference type="ChEBI" id="CHEBI:29105"/>
        <note>catalytic</note>
    </ligand>
</feature>
<feature type="binding site" evidence="1">
    <location>
        <position position="90"/>
    </location>
    <ligand>
        <name>Zn(2+)</name>
        <dbReference type="ChEBI" id="CHEBI:29105"/>
        <note>catalytic</note>
    </ligand>
</feature>
<feature type="binding site" evidence="1">
    <location>
        <position position="101"/>
    </location>
    <ligand>
        <name>Zn(2+)</name>
        <dbReference type="ChEBI" id="CHEBI:29105"/>
        <note>catalytic</note>
    </ligand>
</feature>